<sequence length="356" mass="39602">MILFGSTGSIGVNALKLAALKNIRISALACGDNIALLNEQIARFKPKFVAIKDSKNKHLVKHNRVFIGQEGLEQILTECQDKLLLNAIVGFAGLKSTLKAKELGKNIALANKESLVVAGSFLKGAKFLPVDSEHAALKFLLEGKKNIAKLYITASGGAFYKYKIKDLNQVSLKDALKHPNWNMGAKITIDSATMANKLFEIIEAYHLYDFKEIDALIEPRSLVHAMCEFKNGASTAYFSKADMKLAISDAIFEKQDTPILEAIDFSKIPALKFHPISTKKYPIFKLKNTFLKEPNLGVIINAANEVGVYNFLENKSGFLDITKCIFKALDHFGVPKISSIEEVFEYDFKTREYLRS</sequence>
<dbReference type="EC" id="1.1.1.267" evidence="1"/>
<dbReference type="EMBL" id="CP000538">
    <property type="protein sequence ID" value="EAQ72888.1"/>
    <property type="molecule type" value="Genomic_DNA"/>
</dbReference>
<dbReference type="RefSeq" id="WP_002869325.1">
    <property type="nucleotide sequence ID" value="NC_008787.1"/>
</dbReference>
<dbReference type="SMR" id="A1W0W2"/>
<dbReference type="KEGG" id="cjj:CJJ81176_1345"/>
<dbReference type="eggNOG" id="COG0743">
    <property type="taxonomic scope" value="Bacteria"/>
</dbReference>
<dbReference type="HOGENOM" id="CLU_035714_4_0_7"/>
<dbReference type="UniPathway" id="UPA00056">
    <property type="reaction ID" value="UER00092"/>
</dbReference>
<dbReference type="Proteomes" id="UP000000646">
    <property type="component" value="Chromosome"/>
</dbReference>
<dbReference type="GO" id="GO:0030604">
    <property type="term" value="F:1-deoxy-D-xylulose-5-phosphate reductoisomerase activity"/>
    <property type="evidence" value="ECO:0007669"/>
    <property type="project" value="UniProtKB-UniRule"/>
</dbReference>
<dbReference type="GO" id="GO:0030145">
    <property type="term" value="F:manganese ion binding"/>
    <property type="evidence" value="ECO:0007669"/>
    <property type="project" value="TreeGrafter"/>
</dbReference>
<dbReference type="GO" id="GO:0070402">
    <property type="term" value="F:NADPH binding"/>
    <property type="evidence" value="ECO:0007669"/>
    <property type="project" value="InterPro"/>
</dbReference>
<dbReference type="GO" id="GO:0051484">
    <property type="term" value="P:isopentenyl diphosphate biosynthetic process, methylerythritol 4-phosphate pathway involved in terpenoid biosynthetic process"/>
    <property type="evidence" value="ECO:0007669"/>
    <property type="project" value="TreeGrafter"/>
</dbReference>
<dbReference type="Gene3D" id="1.10.1740.10">
    <property type="match status" value="1"/>
</dbReference>
<dbReference type="Gene3D" id="3.40.50.720">
    <property type="entry name" value="NAD(P)-binding Rossmann-like Domain"/>
    <property type="match status" value="1"/>
</dbReference>
<dbReference type="HAMAP" id="MF_00183">
    <property type="entry name" value="DXP_reductoisom"/>
    <property type="match status" value="1"/>
</dbReference>
<dbReference type="InterPro" id="IPR003821">
    <property type="entry name" value="DXP_reductoisomerase"/>
</dbReference>
<dbReference type="InterPro" id="IPR013644">
    <property type="entry name" value="DXP_reductoisomerase_C"/>
</dbReference>
<dbReference type="InterPro" id="IPR013512">
    <property type="entry name" value="DXP_reductoisomerase_N"/>
</dbReference>
<dbReference type="InterPro" id="IPR026877">
    <property type="entry name" value="DXPR_C"/>
</dbReference>
<dbReference type="InterPro" id="IPR036169">
    <property type="entry name" value="DXPR_C_sf"/>
</dbReference>
<dbReference type="InterPro" id="IPR036291">
    <property type="entry name" value="NAD(P)-bd_dom_sf"/>
</dbReference>
<dbReference type="NCBIfam" id="TIGR00243">
    <property type="entry name" value="Dxr"/>
    <property type="match status" value="1"/>
</dbReference>
<dbReference type="PANTHER" id="PTHR30525">
    <property type="entry name" value="1-DEOXY-D-XYLULOSE 5-PHOSPHATE REDUCTOISOMERASE"/>
    <property type="match status" value="1"/>
</dbReference>
<dbReference type="PANTHER" id="PTHR30525:SF0">
    <property type="entry name" value="1-DEOXY-D-XYLULOSE 5-PHOSPHATE REDUCTOISOMERASE, CHLOROPLASTIC"/>
    <property type="match status" value="1"/>
</dbReference>
<dbReference type="Pfam" id="PF08436">
    <property type="entry name" value="DXP_redisom_C"/>
    <property type="match status" value="1"/>
</dbReference>
<dbReference type="Pfam" id="PF02670">
    <property type="entry name" value="DXP_reductoisom"/>
    <property type="match status" value="1"/>
</dbReference>
<dbReference type="Pfam" id="PF13288">
    <property type="entry name" value="DXPR_C"/>
    <property type="match status" value="1"/>
</dbReference>
<dbReference type="PIRSF" id="PIRSF006205">
    <property type="entry name" value="Dxp_reductismrs"/>
    <property type="match status" value="1"/>
</dbReference>
<dbReference type="SUPFAM" id="SSF69055">
    <property type="entry name" value="1-deoxy-D-xylulose-5-phosphate reductoisomerase, C-terminal domain"/>
    <property type="match status" value="1"/>
</dbReference>
<dbReference type="SUPFAM" id="SSF55347">
    <property type="entry name" value="Glyceraldehyde-3-phosphate dehydrogenase-like, C-terminal domain"/>
    <property type="match status" value="1"/>
</dbReference>
<dbReference type="SUPFAM" id="SSF51735">
    <property type="entry name" value="NAD(P)-binding Rossmann-fold domains"/>
    <property type="match status" value="1"/>
</dbReference>
<keyword id="KW-0414">Isoprene biosynthesis</keyword>
<keyword id="KW-0464">Manganese</keyword>
<keyword id="KW-0479">Metal-binding</keyword>
<keyword id="KW-0521">NADP</keyword>
<keyword id="KW-0560">Oxidoreductase</keyword>
<accession>A1W0W2</accession>
<feature type="chain" id="PRO_1000020240" description="1-deoxy-D-xylulose 5-phosphate reductoisomerase">
    <location>
        <begin position="1"/>
        <end position="356"/>
    </location>
</feature>
<feature type="binding site" evidence="1">
    <location>
        <position position="7"/>
    </location>
    <ligand>
        <name>NADPH</name>
        <dbReference type="ChEBI" id="CHEBI:57783"/>
    </ligand>
</feature>
<feature type="binding site" evidence="1">
    <location>
        <position position="8"/>
    </location>
    <ligand>
        <name>NADPH</name>
        <dbReference type="ChEBI" id="CHEBI:57783"/>
    </ligand>
</feature>
<feature type="binding site" evidence="1">
    <location>
        <position position="9"/>
    </location>
    <ligand>
        <name>NADPH</name>
        <dbReference type="ChEBI" id="CHEBI:57783"/>
    </ligand>
</feature>
<feature type="binding site" evidence="1">
    <location>
        <position position="10"/>
    </location>
    <ligand>
        <name>NADPH</name>
        <dbReference type="ChEBI" id="CHEBI:57783"/>
    </ligand>
</feature>
<feature type="binding site" evidence="1">
    <location>
        <position position="31"/>
    </location>
    <ligand>
        <name>NADPH</name>
        <dbReference type="ChEBI" id="CHEBI:57783"/>
    </ligand>
</feature>
<feature type="binding site" evidence="1">
    <location>
        <position position="33"/>
    </location>
    <ligand>
        <name>NADPH</name>
        <dbReference type="ChEBI" id="CHEBI:57783"/>
    </ligand>
</feature>
<feature type="binding site" evidence="1">
    <location>
        <position position="111"/>
    </location>
    <ligand>
        <name>NADPH</name>
        <dbReference type="ChEBI" id="CHEBI:57783"/>
    </ligand>
</feature>
<feature type="binding site" evidence="1">
    <location>
        <position position="112"/>
    </location>
    <ligand>
        <name>1-deoxy-D-xylulose 5-phosphate</name>
        <dbReference type="ChEBI" id="CHEBI:57792"/>
    </ligand>
</feature>
<feature type="binding site" evidence="1">
    <location>
        <position position="113"/>
    </location>
    <ligand>
        <name>NADPH</name>
        <dbReference type="ChEBI" id="CHEBI:57783"/>
    </ligand>
</feature>
<feature type="binding site" evidence="1">
    <location>
        <position position="131"/>
    </location>
    <ligand>
        <name>Mn(2+)</name>
        <dbReference type="ChEBI" id="CHEBI:29035"/>
    </ligand>
</feature>
<feature type="binding site" evidence="1">
    <location>
        <position position="132"/>
    </location>
    <ligand>
        <name>1-deoxy-D-xylulose 5-phosphate</name>
        <dbReference type="ChEBI" id="CHEBI:57792"/>
    </ligand>
</feature>
<feature type="binding site" evidence="1">
    <location>
        <position position="133"/>
    </location>
    <ligand>
        <name>1-deoxy-D-xylulose 5-phosphate</name>
        <dbReference type="ChEBI" id="CHEBI:57792"/>
    </ligand>
</feature>
<feature type="binding site" evidence="1">
    <location>
        <position position="133"/>
    </location>
    <ligand>
        <name>Mn(2+)</name>
        <dbReference type="ChEBI" id="CHEBI:29035"/>
    </ligand>
</feature>
<feature type="binding site" evidence="1">
    <location>
        <position position="155"/>
    </location>
    <ligand>
        <name>1-deoxy-D-xylulose 5-phosphate</name>
        <dbReference type="ChEBI" id="CHEBI:57792"/>
    </ligand>
</feature>
<feature type="binding site" evidence="1">
    <location>
        <position position="178"/>
    </location>
    <ligand>
        <name>1-deoxy-D-xylulose 5-phosphate</name>
        <dbReference type="ChEBI" id="CHEBI:57792"/>
    </ligand>
</feature>
<feature type="binding site" evidence="1">
    <location>
        <position position="184"/>
    </location>
    <ligand>
        <name>NADPH</name>
        <dbReference type="ChEBI" id="CHEBI:57783"/>
    </ligand>
</feature>
<feature type="binding site" evidence="1">
    <location>
        <position position="191"/>
    </location>
    <ligand>
        <name>1-deoxy-D-xylulose 5-phosphate</name>
        <dbReference type="ChEBI" id="CHEBI:57792"/>
    </ligand>
</feature>
<feature type="binding site" evidence="1">
    <location>
        <position position="196"/>
    </location>
    <ligand>
        <name>1-deoxy-D-xylulose 5-phosphate</name>
        <dbReference type="ChEBI" id="CHEBI:57792"/>
    </ligand>
</feature>
<feature type="binding site" evidence="1">
    <location>
        <position position="197"/>
    </location>
    <ligand>
        <name>1-deoxy-D-xylulose 5-phosphate</name>
        <dbReference type="ChEBI" id="CHEBI:57792"/>
    </ligand>
</feature>
<feature type="binding site" evidence="1">
    <location>
        <position position="200"/>
    </location>
    <ligand>
        <name>1-deoxy-D-xylulose 5-phosphate</name>
        <dbReference type="ChEBI" id="CHEBI:57792"/>
    </ligand>
</feature>
<feature type="binding site" evidence="1">
    <location>
        <position position="200"/>
    </location>
    <ligand>
        <name>Mn(2+)</name>
        <dbReference type="ChEBI" id="CHEBI:29035"/>
    </ligand>
</feature>
<protein>
    <recommendedName>
        <fullName evidence="1">1-deoxy-D-xylulose 5-phosphate reductoisomerase</fullName>
        <shortName evidence="1">DXP reductoisomerase</shortName>
        <ecNumber evidence="1">1.1.1.267</ecNumber>
    </recommendedName>
    <alternativeName>
        <fullName evidence="1">1-deoxyxylulose-5-phosphate reductoisomerase</fullName>
    </alternativeName>
    <alternativeName>
        <fullName evidence="1">2-C-methyl-D-erythritol 4-phosphate synthase</fullName>
    </alternativeName>
</protein>
<reference key="1">
    <citation type="submission" date="2006-12" db="EMBL/GenBank/DDBJ databases">
        <authorList>
            <person name="Fouts D.E."/>
            <person name="Nelson K.E."/>
            <person name="Sebastian Y."/>
        </authorList>
    </citation>
    <scope>NUCLEOTIDE SEQUENCE [LARGE SCALE GENOMIC DNA]</scope>
    <source>
        <strain>81-176</strain>
    </source>
</reference>
<comment type="function">
    <text evidence="1">Catalyzes the NADPH-dependent rearrangement and reduction of 1-deoxy-D-xylulose-5-phosphate (DXP) to 2-C-methyl-D-erythritol 4-phosphate (MEP).</text>
</comment>
<comment type="catalytic activity">
    <reaction evidence="1">
        <text>2-C-methyl-D-erythritol 4-phosphate + NADP(+) = 1-deoxy-D-xylulose 5-phosphate + NADPH + H(+)</text>
        <dbReference type="Rhea" id="RHEA:13717"/>
        <dbReference type="ChEBI" id="CHEBI:15378"/>
        <dbReference type="ChEBI" id="CHEBI:57783"/>
        <dbReference type="ChEBI" id="CHEBI:57792"/>
        <dbReference type="ChEBI" id="CHEBI:58262"/>
        <dbReference type="ChEBI" id="CHEBI:58349"/>
        <dbReference type="EC" id="1.1.1.267"/>
    </reaction>
    <physiologicalReaction direction="right-to-left" evidence="1">
        <dbReference type="Rhea" id="RHEA:13719"/>
    </physiologicalReaction>
</comment>
<comment type="cofactor">
    <cofactor evidence="1">
        <name>Mg(2+)</name>
        <dbReference type="ChEBI" id="CHEBI:18420"/>
    </cofactor>
    <cofactor evidence="1">
        <name>Mn(2+)</name>
        <dbReference type="ChEBI" id="CHEBI:29035"/>
    </cofactor>
</comment>
<comment type="pathway">
    <text evidence="1">Isoprenoid biosynthesis; isopentenyl diphosphate biosynthesis via DXP pathway; isopentenyl diphosphate from 1-deoxy-D-xylulose 5-phosphate: step 1/6.</text>
</comment>
<comment type="similarity">
    <text evidence="1">Belongs to the DXR family.</text>
</comment>
<gene>
    <name evidence="1" type="primary">dxr</name>
    <name type="ordered locus">CJJ81176_1345</name>
</gene>
<proteinExistence type="inferred from homology"/>
<evidence type="ECO:0000255" key="1">
    <source>
        <dbReference type="HAMAP-Rule" id="MF_00183"/>
    </source>
</evidence>
<name>DXR_CAMJJ</name>
<organism>
    <name type="scientific">Campylobacter jejuni subsp. jejuni serotype O:23/36 (strain 81-176)</name>
    <dbReference type="NCBI Taxonomy" id="354242"/>
    <lineage>
        <taxon>Bacteria</taxon>
        <taxon>Pseudomonadati</taxon>
        <taxon>Campylobacterota</taxon>
        <taxon>Epsilonproteobacteria</taxon>
        <taxon>Campylobacterales</taxon>
        <taxon>Campylobacteraceae</taxon>
        <taxon>Campylobacter</taxon>
    </lineage>
</organism>